<name>METN_FRATT</name>
<proteinExistence type="inferred from homology"/>
<gene>
    <name evidence="1" type="primary">metN</name>
    <name type="ordered locus">FTT_1124</name>
</gene>
<organism>
    <name type="scientific">Francisella tularensis subsp. tularensis (strain SCHU S4 / Schu 4)</name>
    <dbReference type="NCBI Taxonomy" id="177416"/>
    <lineage>
        <taxon>Bacteria</taxon>
        <taxon>Pseudomonadati</taxon>
        <taxon>Pseudomonadota</taxon>
        <taxon>Gammaproteobacteria</taxon>
        <taxon>Thiotrichales</taxon>
        <taxon>Francisellaceae</taxon>
        <taxon>Francisella</taxon>
    </lineage>
</organism>
<accession>Q5NFU5</accession>
<comment type="function">
    <text evidence="1">Part of the ABC transporter complex MetNIQ involved in methionine import. Responsible for energy coupling to the transport system.</text>
</comment>
<comment type="catalytic activity">
    <reaction evidence="1">
        <text>L-methionine(out) + ATP + H2O = L-methionine(in) + ADP + phosphate + H(+)</text>
        <dbReference type="Rhea" id="RHEA:29779"/>
        <dbReference type="ChEBI" id="CHEBI:15377"/>
        <dbReference type="ChEBI" id="CHEBI:15378"/>
        <dbReference type="ChEBI" id="CHEBI:30616"/>
        <dbReference type="ChEBI" id="CHEBI:43474"/>
        <dbReference type="ChEBI" id="CHEBI:57844"/>
        <dbReference type="ChEBI" id="CHEBI:456216"/>
        <dbReference type="EC" id="7.4.2.11"/>
    </reaction>
</comment>
<comment type="catalytic activity">
    <reaction evidence="1">
        <text>D-methionine(out) + ATP + H2O = D-methionine(in) + ADP + phosphate + H(+)</text>
        <dbReference type="Rhea" id="RHEA:29767"/>
        <dbReference type="ChEBI" id="CHEBI:15377"/>
        <dbReference type="ChEBI" id="CHEBI:15378"/>
        <dbReference type="ChEBI" id="CHEBI:30616"/>
        <dbReference type="ChEBI" id="CHEBI:43474"/>
        <dbReference type="ChEBI" id="CHEBI:57932"/>
        <dbReference type="ChEBI" id="CHEBI:456216"/>
        <dbReference type="EC" id="7.4.2.11"/>
    </reaction>
</comment>
<comment type="subunit">
    <text evidence="1">The complex is composed of two ATP-binding proteins (MetN), two transmembrane proteins (MetI) and a solute-binding protein (MetQ).</text>
</comment>
<comment type="subcellular location">
    <subcellularLocation>
        <location evidence="1">Cell inner membrane</location>
        <topology evidence="1">Peripheral membrane protein</topology>
    </subcellularLocation>
</comment>
<comment type="similarity">
    <text evidence="1">Belongs to the ABC transporter superfamily. Methionine importer (TC 3.A.1.24) family.</text>
</comment>
<comment type="sequence caution" evidence="2">
    <conflict type="erroneous initiation">
        <sequence resource="EMBL-CDS" id="CAG45757"/>
    </conflict>
</comment>
<protein>
    <recommendedName>
        <fullName evidence="1">Methionine import ATP-binding protein MetN</fullName>
        <ecNumber evidence="1">7.4.2.11</ecNumber>
    </recommendedName>
</protein>
<feature type="chain" id="PRO_0000270302" description="Methionine import ATP-binding protein MetN">
    <location>
        <begin position="1"/>
        <end position="350"/>
    </location>
</feature>
<feature type="domain" description="ABC transporter" evidence="1">
    <location>
        <begin position="2"/>
        <end position="241"/>
    </location>
</feature>
<feature type="binding site" evidence="1">
    <location>
        <begin position="38"/>
        <end position="45"/>
    </location>
    <ligand>
        <name>ATP</name>
        <dbReference type="ChEBI" id="CHEBI:30616"/>
    </ligand>
</feature>
<reference key="1">
    <citation type="journal article" date="2005" name="Nat. Genet.">
        <title>The complete genome sequence of Francisella tularensis, the causative agent of tularemia.</title>
        <authorList>
            <person name="Larsson P."/>
            <person name="Oyston P.C.F."/>
            <person name="Chain P."/>
            <person name="Chu M.C."/>
            <person name="Duffield M."/>
            <person name="Fuxelius H.-H."/>
            <person name="Garcia E."/>
            <person name="Haelltorp G."/>
            <person name="Johansson D."/>
            <person name="Isherwood K.E."/>
            <person name="Karp P.D."/>
            <person name="Larsson E."/>
            <person name="Liu Y."/>
            <person name="Michell S."/>
            <person name="Prior J."/>
            <person name="Prior R."/>
            <person name="Malfatti S."/>
            <person name="Sjoestedt A."/>
            <person name="Svensson K."/>
            <person name="Thompson N."/>
            <person name="Vergez L."/>
            <person name="Wagg J.K."/>
            <person name="Wren B.W."/>
            <person name="Lindler L.E."/>
            <person name="Andersson S.G.E."/>
            <person name="Forsman M."/>
            <person name="Titball R.W."/>
        </authorList>
    </citation>
    <scope>NUCLEOTIDE SEQUENCE [LARGE SCALE GENOMIC DNA]</scope>
    <source>
        <strain>SCHU S4 / Schu 4</strain>
    </source>
</reference>
<evidence type="ECO:0000255" key="1">
    <source>
        <dbReference type="HAMAP-Rule" id="MF_01719"/>
    </source>
</evidence>
<evidence type="ECO:0000305" key="2"/>
<keyword id="KW-0029">Amino-acid transport</keyword>
<keyword id="KW-0067">ATP-binding</keyword>
<keyword id="KW-0997">Cell inner membrane</keyword>
<keyword id="KW-1003">Cell membrane</keyword>
<keyword id="KW-0472">Membrane</keyword>
<keyword id="KW-0547">Nucleotide-binding</keyword>
<keyword id="KW-1185">Reference proteome</keyword>
<keyword id="KW-1278">Translocase</keyword>
<keyword id="KW-0813">Transport</keyword>
<sequence length="350" mass="39092">MIQIKNLKKEYRTNNTSNLVLDNINLEIKQGEIFGIIGHSGAGKSSLLRCLNLLEQPTDGSIFIADENITKKNSKQLREFRKKVAMIFQHFNLLSSRNVFENIALPLEIQGIPKSEIKKRVFELLDLVELPNKANAYPQELSGGQKQKVAIARALALNPLVLLSDEATSALDPTSTKQILALLKILNKELGLTIVLITHEMDVVRKICDRVAIIDKGRIAEMGKTLDVFLNPQAPVTRSFVETSIHTKVPDFIAKKLQDNPYSYDNTYPVVQLTFYGDKGKMPIIAEISRQFNATASIIQANIETIQDQIVGIAICHITGERQGWENALRFLSNQDVNLKVLGYATADNI</sequence>
<dbReference type="EC" id="7.4.2.11" evidence="1"/>
<dbReference type="EMBL" id="AJ749949">
    <property type="protein sequence ID" value="CAG45757.1"/>
    <property type="status" value="ALT_INIT"/>
    <property type="molecule type" value="Genomic_DNA"/>
</dbReference>
<dbReference type="RefSeq" id="WP_003029481.1">
    <property type="nucleotide sequence ID" value="NC_006570.2"/>
</dbReference>
<dbReference type="RefSeq" id="YP_170097.1">
    <property type="nucleotide sequence ID" value="NC_006570.2"/>
</dbReference>
<dbReference type="SMR" id="Q5NFU5"/>
<dbReference type="STRING" id="177416.FTT_1124"/>
<dbReference type="DNASU" id="3190821"/>
<dbReference type="EnsemblBacteria" id="CAG45757">
    <property type="protein sequence ID" value="CAG45757"/>
    <property type="gene ID" value="FTT_1124"/>
</dbReference>
<dbReference type="KEGG" id="ftu:FTT_1124"/>
<dbReference type="eggNOG" id="COG1135">
    <property type="taxonomic scope" value="Bacteria"/>
</dbReference>
<dbReference type="OrthoDB" id="9802264at2"/>
<dbReference type="Proteomes" id="UP000001174">
    <property type="component" value="Chromosome"/>
</dbReference>
<dbReference type="GO" id="GO:0005886">
    <property type="term" value="C:plasma membrane"/>
    <property type="evidence" value="ECO:0007669"/>
    <property type="project" value="UniProtKB-SubCell"/>
</dbReference>
<dbReference type="GO" id="GO:0033232">
    <property type="term" value="F:ABC-type D-methionine transporter activity"/>
    <property type="evidence" value="ECO:0007669"/>
    <property type="project" value="UniProtKB-EC"/>
</dbReference>
<dbReference type="GO" id="GO:0005524">
    <property type="term" value="F:ATP binding"/>
    <property type="evidence" value="ECO:0007669"/>
    <property type="project" value="UniProtKB-KW"/>
</dbReference>
<dbReference type="GO" id="GO:0016887">
    <property type="term" value="F:ATP hydrolysis activity"/>
    <property type="evidence" value="ECO:0007669"/>
    <property type="project" value="InterPro"/>
</dbReference>
<dbReference type="CDD" id="cd03258">
    <property type="entry name" value="ABC_MetN_methionine_transporter"/>
    <property type="match status" value="1"/>
</dbReference>
<dbReference type="FunFam" id="3.40.50.300:FF:000056">
    <property type="entry name" value="Cell division ATP-binding protein FtsE"/>
    <property type="match status" value="1"/>
</dbReference>
<dbReference type="Gene3D" id="3.30.70.260">
    <property type="match status" value="1"/>
</dbReference>
<dbReference type="Gene3D" id="3.40.50.300">
    <property type="entry name" value="P-loop containing nucleotide triphosphate hydrolases"/>
    <property type="match status" value="1"/>
</dbReference>
<dbReference type="InterPro" id="IPR003593">
    <property type="entry name" value="AAA+_ATPase"/>
</dbReference>
<dbReference type="InterPro" id="IPR003439">
    <property type="entry name" value="ABC_transporter-like_ATP-bd"/>
</dbReference>
<dbReference type="InterPro" id="IPR017871">
    <property type="entry name" value="ABC_transporter-like_CS"/>
</dbReference>
<dbReference type="InterPro" id="IPR045865">
    <property type="entry name" value="ACT-like_dom_sf"/>
</dbReference>
<dbReference type="InterPro" id="IPR041701">
    <property type="entry name" value="MetN_ABC"/>
</dbReference>
<dbReference type="InterPro" id="IPR050086">
    <property type="entry name" value="MetN_ABC_transporter-like"/>
</dbReference>
<dbReference type="InterPro" id="IPR018449">
    <property type="entry name" value="NIL_domain"/>
</dbReference>
<dbReference type="InterPro" id="IPR027417">
    <property type="entry name" value="P-loop_NTPase"/>
</dbReference>
<dbReference type="PANTHER" id="PTHR43166">
    <property type="entry name" value="AMINO ACID IMPORT ATP-BINDING PROTEIN"/>
    <property type="match status" value="1"/>
</dbReference>
<dbReference type="PANTHER" id="PTHR43166:SF30">
    <property type="entry name" value="METHIONINE IMPORT ATP-BINDING PROTEIN METN"/>
    <property type="match status" value="1"/>
</dbReference>
<dbReference type="Pfam" id="PF00005">
    <property type="entry name" value="ABC_tran"/>
    <property type="match status" value="1"/>
</dbReference>
<dbReference type="Pfam" id="PF09383">
    <property type="entry name" value="NIL"/>
    <property type="match status" value="1"/>
</dbReference>
<dbReference type="SMART" id="SM00382">
    <property type="entry name" value="AAA"/>
    <property type="match status" value="1"/>
</dbReference>
<dbReference type="SMART" id="SM00930">
    <property type="entry name" value="NIL"/>
    <property type="match status" value="1"/>
</dbReference>
<dbReference type="SUPFAM" id="SSF55021">
    <property type="entry name" value="ACT-like"/>
    <property type="match status" value="1"/>
</dbReference>
<dbReference type="SUPFAM" id="SSF52540">
    <property type="entry name" value="P-loop containing nucleoside triphosphate hydrolases"/>
    <property type="match status" value="1"/>
</dbReference>
<dbReference type="PROSITE" id="PS00211">
    <property type="entry name" value="ABC_TRANSPORTER_1"/>
    <property type="match status" value="1"/>
</dbReference>
<dbReference type="PROSITE" id="PS50893">
    <property type="entry name" value="ABC_TRANSPORTER_2"/>
    <property type="match status" value="1"/>
</dbReference>
<dbReference type="PROSITE" id="PS51264">
    <property type="entry name" value="METN"/>
    <property type="match status" value="1"/>
</dbReference>